<proteinExistence type="evidence at transcript level"/>
<reference key="1">
    <citation type="submission" date="2005-08" db="EMBL/GenBank/DDBJ databases">
        <authorList>
            <consortium name="NIH - Mammalian Gene Collection (MGC) project"/>
        </authorList>
    </citation>
    <scope>NUCLEOTIDE SEQUENCE [LARGE SCALE MRNA]</scope>
    <source>
        <strain>Crossbred X Angus</strain>
        <tissue>Ileum</tissue>
    </source>
</reference>
<keyword id="KW-0007">Acetylation</keyword>
<keyword id="KW-0963">Cytoplasm</keyword>
<keyword id="KW-0539">Nucleus</keyword>
<keyword id="KW-0597">Phosphoprotein</keyword>
<keyword id="KW-1185">Reference proteome</keyword>
<keyword id="KW-0833">Ubl conjugation pathway</keyword>
<dbReference type="EMBL" id="BC102091">
    <property type="protein sequence ID" value="AAI02092.1"/>
    <property type="molecule type" value="mRNA"/>
</dbReference>
<dbReference type="RefSeq" id="NP_001029981.1">
    <property type="nucleotide sequence ID" value="NM_001034809.2"/>
</dbReference>
<dbReference type="BMRB" id="Q3T168"/>
<dbReference type="SMR" id="Q3T168"/>
<dbReference type="FunCoup" id="Q3T168">
    <property type="interactions" value="3001"/>
</dbReference>
<dbReference type="STRING" id="9913.ENSBTAP00000001464"/>
<dbReference type="PaxDb" id="9913-ENSBTAP00000001464"/>
<dbReference type="Ensembl" id="ENSBTAT00000001464.4">
    <property type="protein sequence ID" value="ENSBTAP00000001464.3"/>
    <property type="gene ID" value="ENSBTAG00000001107.5"/>
</dbReference>
<dbReference type="GeneID" id="618428"/>
<dbReference type="KEGG" id="bta:618428"/>
<dbReference type="CTD" id="27101"/>
<dbReference type="VEuPathDB" id="HostDB:ENSBTAG00000001107"/>
<dbReference type="VGNC" id="VGNC:26693">
    <property type="gene designation" value="CACYBP"/>
</dbReference>
<dbReference type="eggNOG" id="KOG3260">
    <property type="taxonomic scope" value="Eukaryota"/>
</dbReference>
<dbReference type="GeneTree" id="ENSGT00390000016470"/>
<dbReference type="HOGENOM" id="CLU_081441_2_0_1"/>
<dbReference type="InParanoid" id="Q3T168"/>
<dbReference type="OMA" id="YGWDQSA"/>
<dbReference type="OrthoDB" id="164025at2759"/>
<dbReference type="TreeFam" id="TF323891"/>
<dbReference type="Proteomes" id="UP000009136">
    <property type="component" value="Chromosome 16"/>
</dbReference>
<dbReference type="Bgee" id="ENSBTAG00000001107">
    <property type="expression patterns" value="Expressed in dorsal thalamus and 105 other cell types or tissues"/>
</dbReference>
<dbReference type="GO" id="GO:0030877">
    <property type="term" value="C:beta-catenin destruction complex"/>
    <property type="evidence" value="ECO:0000250"/>
    <property type="project" value="UniProtKB"/>
</dbReference>
<dbReference type="GO" id="GO:0005737">
    <property type="term" value="C:cytoplasm"/>
    <property type="evidence" value="ECO:0007669"/>
    <property type="project" value="UniProtKB-SubCell"/>
</dbReference>
<dbReference type="GO" id="GO:0005634">
    <property type="term" value="C:nucleus"/>
    <property type="evidence" value="ECO:0000318"/>
    <property type="project" value="GO_Central"/>
</dbReference>
<dbReference type="GO" id="GO:0044548">
    <property type="term" value="F:S100 protein binding"/>
    <property type="evidence" value="ECO:0007669"/>
    <property type="project" value="InterPro"/>
</dbReference>
<dbReference type="GO" id="GO:0015631">
    <property type="term" value="F:tubulin binding"/>
    <property type="evidence" value="ECO:0007669"/>
    <property type="project" value="InterPro"/>
</dbReference>
<dbReference type="GO" id="GO:0031625">
    <property type="term" value="F:ubiquitin protein ligase binding"/>
    <property type="evidence" value="ECO:0007669"/>
    <property type="project" value="InterPro"/>
</dbReference>
<dbReference type="GO" id="GO:0007507">
    <property type="term" value="P:heart development"/>
    <property type="evidence" value="ECO:0000318"/>
    <property type="project" value="GO_Central"/>
</dbReference>
<dbReference type="CDD" id="cd06468">
    <property type="entry name" value="p23_CacyBP"/>
    <property type="match status" value="1"/>
</dbReference>
<dbReference type="FunFam" id="2.60.40.790:FF:000006">
    <property type="entry name" value="calcyclin-binding protein-like"/>
    <property type="match status" value="1"/>
</dbReference>
<dbReference type="FunFam" id="4.10.860.10:FF:000006">
    <property type="entry name" value="calcyclin-binding protein-like"/>
    <property type="match status" value="1"/>
</dbReference>
<dbReference type="Gene3D" id="2.60.40.790">
    <property type="match status" value="1"/>
</dbReference>
<dbReference type="Gene3D" id="4.10.860.10">
    <property type="entry name" value="UVR domain"/>
    <property type="match status" value="1"/>
</dbReference>
<dbReference type="InterPro" id="IPR037201">
    <property type="entry name" value="CacyBP_N"/>
</dbReference>
<dbReference type="InterPro" id="IPR052289">
    <property type="entry name" value="Calcyclin-binding_UBL-bridge"/>
</dbReference>
<dbReference type="InterPro" id="IPR037893">
    <property type="entry name" value="CS_CacyBP"/>
</dbReference>
<dbReference type="InterPro" id="IPR007052">
    <property type="entry name" value="CS_dom"/>
</dbReference>
<dbReference type="InterPro" id="IPR008978">
    <property type="entry name" value="HSP20-like_chaperone"/>
</dbReference>
<dbReference type="InterPro" id="IPR007699">
    <property type="entry name" value="SGS_dom"/>
</dbReference>
<dbReference type="InterPro" id="IPR015120">
    <property type="entry name" value="Siah-Interact_N"/>
</dbReference>
<dbReference type="PANTHER" id="PTHR13164:SF3">
    <property type="entry name" value="CALCYCLIN-BINDING PROTEIN"/>
    <property type="match status" value="1"/>
</dbReference>
<dbReference type="PANTHER" id="PTHR13164">
    <property type="entry name" value="CALICYLIN BINDING PROTEIN"/>
    <property type="match status" value="1"/>
</dbReference>
<dbReference type="Pfam" id="PF04969">
    <property type="entry name" value="CS"/>
    <property type="match status" value="1"/>
</dbReference>
<dbReference type="Pfam" id="PF05002">
    <property type="entry name" value="SGS"/>
    <property type="match status" value="1"/>
</dbReference>
<dbReference type="Pfam" id="PF09032">
    <property type="entry name" value="Siah-Interact_N"/>
    <property type="match status" value="1"/>
</dbReference>
<dbReference type="SUPFAM" id="SSF140106">
    <property type="entry name" value="Calcyclin-binding protein-like"/>
    <property type="match status" value="1"/>
</dbReference>
<dbReference type="SUPFAM" id="SSF49764">
    <property type="entry name" value="HSP20-like chaperones"/>
    <property type="match status" value="1"/>
</dbReference>
<dbReference type="PROSITE" id="PS51203">
    <property type="entry name" value="CS"/>
    <property type="match status" value="1"/>
</dbReference>
<dbReference type="PROSITE" id="PS51048">
    <property type="entry name" value="SGS"/>
    <property type="match status" value="1"/>
</dbReference>
<protein>
    <recommendedName>
        <fullName>Calcyclin-binding protein</fullName>
        <shortName>CacyBP</shortName>
    </recommendedName>
</protein>
<organism>
    <name type="scientific">Bos taurus</name>
    <name type="common">Bovine</name>
    <dbReference type="NCBI Taxonomy" id="9913"/>
    <lineage>
        <taxon>Eukaryota</taxon>
        <taxon>Metazoa</taxon>
        <taxon>Chordata</taxon>
        <taxon>Craniata</taxon>
        <taxon>Vertebrata</taxon>
        <taxon>Euteleostomi</taxon>
        <taxon>Mammalia</taxon>
        <taxon>Eutheria</taxon>
        <taxon>Laurasiatheria</taxon>
        <taxon>Artiodactyla</taxon>
        <taxon>Ruminantia</taxon>
        <taxon>Pecora</taxon>
        <taxon>Bovidae</taxon>
        <taxon>Bovinae</taxon>
        <taxon>Bos</taxon>
    </lineage>
</organism>
<comment type="function">
    <text evidence="1">May be involved in calcium-dependent ubiquitination and subsequent proteasomal degradation of target proteins. Probably serves as a molecular bridge in ubiquitin E3 complexes. Participates in the ubiquitin-mediated degradation of beta-catenin (CTNNB1) (By similarity).</text>
</comment>
<comment type="subunit">
    <text evidence="1">Monomer or homodimer. Component of some large E3 complex at least composed of UBE2D1, SIAH1, CACYBP/SIP, SKP1, APC and TBL1X. Interacts directly with SIAH1, SIAH2 and SKP1. Interacts with proteins of the S100 family S100A1, S100A6, S100B, S100P and S100A12 in a calcium-dependent manner (By similarity).</text>
</comment>
<comment type="subcellular location">
    <subcellularLocation>
        <location evidence="1">Nucleus</location>
    </subcellularLocation>
    <subcellularLocation>
        <location evidence="1">Cytoplasm</location>
    </subcellularLocation>
</comment>
<comment type="PTM">
    <text evidence="1">Phosphorylated on serine residues. Phosphorylated upon induction by RA or at high calcium concentrations (By similarity).</text>
</comment>
<feature type="chain" id="PRO_0000271389" description="Calcyclin-binding protein">
    <location>
        <begin position="1"/>
        <end position="230"/>
    </location>
</feature>
<feature type="domain" description="CS" evidence="4">
    <location>
        <begin position="75"/>
        <end position="169"/>
    </location>
</feature>
<feature type="domain" description="SGS" evidence="3">
    <location>
        <begin position="170"/>
        <end position="230"/>
    </location>
</feature>
<feature type="region of interest" description="Interaction with SIAH1" evidence="1">
    <location>
        <begin position="1"/>
        <end position="82"/>
    </location>
</feature>
<feature type="region of interest" description="Disordered" evidence="5">
    <location>
        <begin position="38"/>
        <end position="59"/>
    </location>
</feature>
<feature type="region of interest" description="Interaction with SKP1" evidence="1">
    <location>
        <begin position="75"/>
        <end position="230"/>
    </location>
</feature>
<feature type="region of interest" description="Interaction with S100A6" evidence="1">
    <location>
        <begin position="156"/>
        <end position="230"/>
    </location>
</feature>
<feature type="modified residue" description="Phosphoserine" evidence="2">
    <location>
        <position position="3"/>
    </location>
</feature>
<feature type="modified residue" description="N6-acetyllysine" evidence="2">
    <location>
        <position position="10"/>
    </location>
</feature>
<feature type="modified residue" description="N6-acetyllysine" evidence="2">
    <location>
        <position position="21"/>
    </location>
</feature>
<feature type="modified residue" description="Phosphoserine" evidence="2">
    <location>
        <position position="36"/>
    </location>
</feature>
<feature type="modified residue" description="N6-acetyllysine" evidence="2">
    <location>
        <position position="87"/>
    </location>
</feature>
<feature type="modified residue" description="N6-acetyllysine" evidence="2">
    <location>
        <position position="120"/>
    </location>
</feature>
<name>CYBP_BOVIN</name>
<gene>
    <name type="primary">CACYBP</name>
</gene>
<sequence>MSSALEELQKDLEEVKVLLEKATRKRVRDALTAEKSKIETEMKNKMQQKSQRKAELTENEKPAAVVAPITTGYTVKISNYGWDQSDKFVKIYITLPGVHQVPAESVQVNFTERSFDLLVKNLNGKSYSMIVNNLLKPISVEGSSKKVKTDTVLILCRKKAENTRWDYLTQVEKECKEKEKPSYDTETDPSEGLMNVLKKIYEDGDDDMKRTINKAWVESREKQAKGDTDF</sequence>
<evidence type="ECO:0000250" key="1"/>
<evidence type="ECO:0000250" key="2">
    <source>
        <dbReference type="UniProtKB" id="Q9HB71"/>
    </source>
</evidence>
<evidence type="ECO:0000255" key="3">
    <source>
        <dbReference type="PROSITE-ProRule" id="PRU00386"/>
    </source>
</evidence>
<evidence type="ECO:0000255" key="4">
    <source>
        <dbReference type="PROSITE-ProRule" id="PRU00547"/>
    </source>
</evidence>
<evidence type="ECO:0000256" key="5">
    <source>
        <dbReference type="SAM" id="MobiDB-lite"/>
    </source>
</evidence>
<accession>Q3T168</accession>